<proteinExistence type="predicted"/>
<name>Y489_MYCBO</name>
<comment type="subcellular location">
    <subcellularLocation>
        <location evidence="3">Cell membrane</location>
        <topology evidence="3">Multi-pass membrane protein</topology>
    </subcellularLocation>
</comment>
<keyword id="KW-1003">Cell membrane</keyword>
<keyword id="KW-0472">Membrane</keyword>
<keyword id="KW-1185">Reference proteome</keyword>
<keyword id="KW-0812">Transmembrane</keyword>
<keyword id="KW-1133">Transmembrane helix</keyword>
<protein>
    <recommendedName>
        <fullName>Uncharacterized protein Mb0489c</fullName>
    </recommendedName>
</protein>
<evidence type="ECO:0000255" key="1"/>
<evidence type="ECO:0000256" key="2">
    <source>
        <dbReference type="SAM" id="MobiDB-lite"/>
    </source>
</evidence>
<evidence type="ECO:0000305" key="3"/>
<dbReference type="EMBL" id="LT708304">
    <property type="protein sequence ID" value="SIT99084.1"/>
    <property type="molecule type" value="Genomic_DNA"/>
</dbReference>
<dbReference type="RefSeq" id="NP_854152.1">
    <property type="nucleotide sequence ID" value="NC_002945.3"/>
</dbReference>
<dbReference type="RefSeq" id="WP_003898475.1">
    <property type="nucleotide sequence ID" value="NC_002945.4"/>
</dbReference>
<dbReference type="SMR" id="P64700"/>
<dbReference type="PATRIC" id="fig|233413.5.peg.531"/>
<dbReference type="Proteomes" id="UP000001419">
    <property type="component" value="Chromosome"/>
</dbReference>
<dbReference type="GO" id="GO:0005886">
    <property type="term" value="C:plasma membrane"/>
    <property type="evidence" value="ECO:0007669"/>
    <property type="project" value="UniProtKB-SubCell"/>
</dbReference>
<dbReference type="InterPro" id="IPR021373">
    <property type="entry name" value="DUF2993"/>
</dbReference>
<dbReference type="Pfam" id="PF11209">
    <property type="entry name" value="LmeA"/>
    <property type="match status" value="1"/>
</dbReference>
<accession>P64700</accession>
<accession>A0A1R3XVK5</accession>
<accession>Q11145</accession>
<accession>X2BF60</accession>
<organism>
    <name type="scientific">Mycobacterium bovis (strain ATCC BAA-935 / AF2122/97)</name>
    <dbReference type="NCBI Taxonomy" id="233413"/>
    <lineage>
        <taxon>Bacteria</taxon>
        <taxon>Bacillati</taxon>
        <taxon>Actinomycetota</taxon>
        <taxon>Actinomycetes</taxon>
        <taxon>Mycobacteriales</taxon>
        <taxon>Mycobacteriaceae</taxon>
        <taxon>Mycobacterium</taxon>
        <taxon>Mycobacterium tuberculosis complex</taxon>
    </lineage>
</organism>
<gene>
    <name type="ordered locus">BQ2027_MB0489C</name>
</gene>
<reference key="1">
    <citation type="journal article" date="2003" name="Proc. Natl. Acad. Sci. U.S.A.">
        <title>The complete genome sequence of Mycobacterium bovis.</title>
        <authorList>
            <person name="Garnier T."/>
            <person name="Eiglmeier K."/>
            <person name="Camus J.-C."/>
            <person name="Medina N."/>
            <person name="Mansoor H."/>
            <person name="Pryor M."/>
            <person name="Duthoy S."/>
            <person name="Grondin S."/>
            <person name="Lacroix C."/>
            <person name="Monsempe C."/>
            <person name="Simon S."/>
            <person name="Harris B."/>
            <person name="Atkin R."/>
            <person name="Doggett J."/>
            <person name="Mayes R."/>
            <person name="Keating L."/>
            <person name="Wheeler P.R."/>
            <person name="Parkhill J."/>
            <person name="Barrell B.G."/>
            <person name="Cole S.T."/>
            <person name="Gordon S.V."/>
            <person name="Hewinson R.G."/>
        </authorList>
    </citation>
    <scope>NUCLEOTIDE SEQUENCE [LARGE SCALE GENOMIC DNA]</scope>
    <source>
        <strain>ATCC BAA-935 / AF2122/97</strain>
    </source>
</reference>
<reference key="2">
    <citation type="journal article" date="2017" name="Genome Announc.">
        <title>Updated reference genome sequence and annotation of Mycobacterium bovis AF2122/97.</title>
        <authorList>
            <person name="Malone K.M."/>
            <person name="Farrell D."/>
            <person name="Stuber T.P."/>
            <person name="Schubert O.T."/>
            <person name="Aebersold R."/>
            <person name="Robbe-Austerman S."/>
            <person name="Gordon S.V."/>
        </authorList>
    </citation>
    <scope>NUCLEOTIDE SEQUENCE [LARGE SCALE GENOMIC DNA]</scope>
    <scope>GENOME REANNOTATION</scope>
    <source>
        <strain>ATCC BAA-935 / AF2122/97</strain>
    </source>
</reference>
<sequence length="348" mass="37048">MTNPQGPPNDPSPWARPGDQGPLARPPASSEASTGRLRPGEPAGHIQEPVSPPTQPEQQPQTEHLAASHAHTRRSGRQAAHQAWDPTGLLAAQEEEPAAVKTKRRARRDPLTVFLVLIIVFSLVLAGLIGGELYARHVANSKVAQAVACVVKDQATASFGVAPLLLWQVATRHFTNISVETAGNQIRDAKGMQIKLTIQNVRLKNTPNSRGTIGALDATITWSSEGIKESVQNAIPILGAFVTSSVVTHPADGTVELKGLLNNITAKPIVAGKGLELQIINFNTLGFSLPKETVQSTLNEFTSSLTKNYPLGIHADSVQVTSTGVVSRFSTRDAAIPTGIQNPCFSHI</sequence>
<feature type="chain" id="PRO_0000103682" description="Uncharacterized protein Mb0489c">
    <location>
        <begin position="1"/>
        <end position="348"/>
    </location>
</feature>
<feature type="transmembrane region" description="Helical" evidence="1">
    <location>
        <begin position="111"/>
        <end position="131"/>
    </location>
</feature>
<feature type="transmembrane region" description="Helical" evidence="1">
    <location>
        <begin position="235"/>
        <end position="255"/>
    </location>
</feature>
<feature type="region of interest" description="Disordered" evidence="2">
    <location>
        <begin position="1"/>
        <end position="83"/>
    </location>
</feature>
<feature type="compositionally biased region" description="Pro residues" evidence="2">
    <location>
        <begin position="1"/>
        <end position="11"/>
    </location>
</feature>